<evidence type="ECO:0000255" key="1">
    <source>
        <dbReference type="PROSITE-ProRule" id="PRU00186"/>
    </source>
</evidence>
<evidence type="ECO:0000256" key="2">
    <source>
        <dbReference type="SAM" id="MobiDB-lite"/>
    </source>
</evidence>
<evidence type="ECO:0000269" key="3">
    <source>
    </source>
</evidence>
<evidence type="ECO:0000305" key="4"/>
<feature type="chain" id="PRO_0000116557" description="Protein mlo1">
    <location>
        <begin position="1"/>
        <end position="245"/>
    </location>
</feature>
<feature type="domain" description="SAP" evidence="1">
    <location>
        <begin position="4"/>
        <end position="38"/>
    </location>
</feature>
<feature type="region of interest" description="Disordered" evidence="2">
    <location>
        <begin position="32"/>
        <end position="245"/>
    </location>
</feature>
<feature type="compositionally biased region" description="Low complexity" evidence="2">
    <location>
        <begin position="37"/>
        <end position="52"/>
    </location>
</feature>
<feature type="compositionally biased region" description="Acidic residues" evidence="2">
    <location>
        <begin position="58"/>
        <end position="70"/>
    </location>
</feature>
<feature type="compositionally biased region" description="Polar residues" evidence="2">
    <location>
        <begin position="109"/>
        <end position="118"/>
    </location>
</feature>
<feature type="compositionally biased region" description="Basic and acidic residues" evidence="2">
    <location>
        <begin position="119"/>
        <end position="130"/>
    </location>
</feature>
<feature type="compositionally biased region" description="Low complexity" evidence="2">
    <location>
        <begin position="182"/>
        <end position="196"/>
    </location>
</feature>
<feature type="modified residue" description="Phosphoserine" evidence="3">
    <location>
        <position position="139"/>
    </location>
</feature>
<feature type="sequence conflict" description="In Ref. 2; AAC49606." evidence="4" ref="2">
    <original>DVNKPAEPESKETSAPA</original>
    <variation>ELTSQQNPKVKRPVLLP</variation>
    <location>
        <begin position="76"/>
        <end position="92"/>
    </location>
</feature>
<reference key="1">
    <citation type="journal article" date="2002" name="Nature">
        <title>The genome sequence of Schizosaccharomyces pombe.</title>
        <authorList>
            <person name="Wood V."/>
            <person name="Gwilliam R."/>
            <person name="Rajandream M.A."/>
            <person name="Lyne M.H."/>
            <person name="Lyne R."/>
            <person name="Stewart A."/>
            <person name="Sgouros J.G."/>
            <person name="Peat N."/>
            <person name="Hayles J."/>
            <person name="Baker S.G."/>
            <person name="Basham D."/>
            <person name="Bowman S."/>
            <person name="Brooks K."/>
            <person name="Brown D."/>
            <person name="Brown S."/>
            <person name="Chillingworth T."/>
            <person name="Churcher C.M."/>
            <person name="Collins M."/>
            <person name="Connor R."/>
            <person name="Cronin A."/>
            <person name="Davis P."/>
            <person name="Feltwell T."/>
            <person name="Fraser A."/>
            <person name="Gentles S."/>
            <person name="Goble A."/>
            <person name="Hamlin N."/>
            <person name="Harris D.E."/>
            <person name="Hidalgo J."/>
            <person name="Hodgson G."/>
            <person name="Holroyd S."/>
            <person name="Hornsby T."/>
            <person name="Howarth S."/>
            <person name="Huckle E.J."/>
            <person name="Hunt S."/>
            <person name="Jagels K."/>
            <person name="James K.D."/>
            <person name="Jones L."/>
            <person name="Jones M."/>
            <person name="Leather S."/>
            <person name="McDonald S."/>
            <person name="McLean J."/>
            <person name="Mooney P."/>
            <person name="Moule S."/>
            <person name="Mungall K.L."/>
            <person name="Murphy L.D."/>
            <person name="Niblett D."/>
            <person name="Odell C."/>
            <person name="Oliver K."/>
            <person name="O'Neil S."/>
            <person name="Pearson D."/>
            <person name="Quail M.A."/>
            <person name="Rabbinowitsch E."/>
            <person name="Rutherford K.M."/>
            <person name="Rutter S."/>
            <person name="Saunders D."/>
            <person name="Seeger K."/>
            <person name="Sharp S."/>
            <person name="Skelton J."/>
            <person name="Simmonds M.N."/>
            <person name="Squares R."/>
            <person name="Squares S."/>
            <person name="Stevens K."/>
            <person name="Taylor K."/>
            <person name="Taylor R.G."/>
            <person name="Tivey A."/>
            <person name="Walsh S.V."/>
            <person name="Warren T."/>
            <person name="Whitehead S."/>
            <person name="Woodward J.R."/>
            <person name="Volckaert G."/>
            <person name="Aert R."/>
            <person name="Robben J."/>
            <person name="Grymonprez B."/>
            <person name="Weltjens I."/>
            <person name="Vanstreels E."/>
            <person name="Rieger M."/>
            <person name="Schaefer M."/>
            <person name="Mueller-Auer S."/>
            <person name="Gabel C."/>
            <person name="Fuchs M."/>
            <person name="Duesterhoeft A."/>
            <person name="Fritzc C."/>
            <person name="Holzer E."/>
            <person name="Moestl D."/>
            <person name="Hilbert H."/>
            <person name="Borzym K."/>
            <person name="Langer I."/>
            <person name="Beck A."/>
            <person name="Lehrach H."/>
            <person name="Reinhardt R."/>
            <person name="Pohl T.M."/>
            <person name="Eger P."/>
            <person name="Zimmermann W."/>
            <person name="Wedler H."/>
            <person name="Wambutt R."/>
            <person name="Purnelle B."/>
            <person name="Goffeau A."/>
            <person name="Cadieu E."/>
            <person name="Dreano S."/>
            <person name="Gloux S."/>
            <person name="Lelaure V."/>
            <person name="Mottier S."/>
            <person name="Galibert F."/>
            <person name="Aves S.J."/>
            <person name="Xiang Z."/>
            <person name="Hunt C."/>
            <person name="Moore K."/>
            <person name="Hurst S.M."/>
            <person name="Lucas M."/>
            <person name="Rochet M."/>
            <person name="Gaillardin C."/>
            <person name="Tallada V.A."/>
            <person name="Garzon A."/>
            <person name="Thode G."/>
            <person name="Daga R.R."/>
            <person name="Cruzado L."/>
            <person name="Jimenez J."/>
            <person name="Sanchez M."/>
            <person name="del Rey F."/>
            <person name="Benito J."/>
            <person name="Dominguez A."/>
            <person name="Revuelta J.L."/>
            <person name="Moreno S."/>
            <person name="Armstrong J."/>
            <person name="Forsburg S.L."/>
            <person name="Cerutti L."/>
            <person name="Lowe T."/>
            <person name="McCombie W.R."/>
            <person name="Paulsen I."/>
            <person name="Potashkin J."/>
            <person name="Shpakovski G.V."/>
            <person name="Ussery D."/>
            <person name="Barrell B.G."/>
            <person name="Nurse P."/>
        </authorList>
    </citation>
    <scope>NUCLEOTIDE SEQUENCE [LARGE SCALE GENOMIC DNA]</scope>
    <source>
        <strain>972 / ATCC 24843</strain>
    </source>
</reference>
<reference key="2">
    <citation type="journal article" date="1996" name="Nucleic Acids Res.">
        <title>Fission yeast genes which disrupt mitotic chromosome segregation when overexpressed.</title>
        <authorList>
            <person name="Javerzat J.-P."/>
            <person name="Cranston G."/>
            <person name="Allshire R.C."/>
        </authorList>
    </citation>
    <scope>NUCLEOTIDE SEQUENCE [MRNA] OF 1-92</scope>
    <source>
        <strain>972 / ATCC 24843</strain>
    </source>
</reference>
<reference key="3">
    <citation type="journal article" date="2008" name="J. Proteome Res.">
        <title>Phosphoproteome analysis of fission yeast.</title>
        <authorList>
            <person name="Wilson-Grady J.T."/>
            <person name="Villen J."/>
            <person name="Gygi S.P."/>
        </authorList>
    </citation>
    <scope>PHOSPHORYLATION [LARGE SCALE ANALYSIS] AT SER-139</scope>
    <scope>IDENTIFICATION BY MASS SPECTROMETRY</scope>
</reference>
<organism>
    <name type="scientific">Schizosaccharomyces pombe (strain 972 / ATCC 24843)</name>
    <name type="common">Fission yeast</name>
    <dbReference type="NCBI Taxonomy" id="284812"/>
    <lineage>
        <taxon>Eukaryota</taxon>
        <taxon>Fungi</taxon>
        <taxon>Dikarya</taxon>
        <taxon>Ascomycota</taxon>
        <taxon>Taphrinomycotina</taxon>
        <taxon>Schizosaccharomycetes</taxon>
        <taxon>Schizosaccharomycetales</taxon>
        <taxon>Schizosaccharomycetaceae</taxon>
        <taxon>Schizosaccharomyces</taxon>
    </lineage>
</organism>
<protein>
    <recommendedName>
        <fullName>Protein mlo1</fullName>
    </recommendedName>
</protein>
<sequence>MSDYKSLKVAELREKLAEKGLSTAGNKAELVSRLTAATESNDENTSNNNATDLGDLAPPEDDIDWGDMENDTISTDVNKPAEPESKETSAPAAAVEIEKENESIISKETSQAPETSTGAEEHQETTEESKQSVSNEVSSPDVAKEQEKLIQRAKRFGIPVDDEQIKKAARAARFGIQQPLASSNNKNHNQSKNPQNRSNSRSKQRNKNAPPKSAPSKRKSNILDDPIEAEKARKRAERFGVAAKN</sequence>
<accession>O74871</accession>
<accession>Q92381</accession>
<name>YCW3_SCHPO</name>
<comment type="similarity">
    <text evidence="4">Belongs to the SAP domain-containing ribonucleoprotein family.</text>
</comment>
<proteinExistence type="evidence at protein level"/>
<dbReference type="EMBL" id="CU329672">
    <property type="protein sequence ID" value="CAA21220.1"/>
    <property type="molecule type" value="Genomic_DNA"/>
</dbReference>
<dbReference type="EMBL" id="U73337">
    <property type="protein sequence ID" value="AAC49606.1"/>
    <property type="molecule type" value="mRNA"/>
</dbReference>
<dbReference type="PIR" id="T41291">
    <property type="entry name" value="T41291"/>
</dbReference>
<dbReference type="RefSeq" id="NP_587896.1">
    <property type="nucleotide sequence ID" value="NM_001022888.2"/>
</dbReference>
<dbReference type="SMR" id="O74871"/>
<dbReference type="BioGRID" id="275508">
    <property type="interactions" value="4"/>
</dbReference>
<dbReference type="FunCoup" id="O74871">
    <property type="interactions" value="820"/>
</dbReference>
<dbReference type="IntAct" id="O74871">
    <property type="interactions" value="1"/>
</dbReference>
<dbReference type="STRING" id="284812.O74871"/>
<dbReference type="iPTMnet" id="O74871"/>
<dbReference type="PaxDb" id="4896-SPCC31H12.03c.1"/>
<dbReference type="EnsemblFungi" id="SPCC31H12.03c.1">
    <property type="protein sequence ID" value="SPCC31H12.03c.1:pep"/>
    <property type="gene ID" value="SPCC31H12.03c"/>
</dbReference>
<dbReference type="GeneID" id="2538932"/>
<dbReference type="KEGG" id="spo:2538932"/>
<dbReference type="PomBase" id="SPCC31H12.03c"/>
<dbReference type="VEuPathDB" id="FungiDB:SPCC31H12.03c"/>
<dbReference type="eggNOG" id="KOG4259">
    <property type="taxonomic scope" value="Eukaryota"/>
</dbReference>
<dbReference type="HOGENOM" id="CLU_1129636_0_0_1"/>
<dbReference type="InParanoid" id="O74871"/>
<dbReference type="OMA" id="HEERYIE"/>
<dbReference type="PhylomeDB" id="O74871"/>
<dbReference type="PRO" id="PR:O74871"/>
<dbReference type="Proteomes" id="UP000002485">
    <property type="component" value="Chromosome III"/>
</dbReference>
<dbReference type="GO" id="GO:0005634">
    <property type="term" value="C:nucleus"/>
    <property type="evidence" value="ECO:0007005"/>
    <property type="project" value="PomBase"/>
</dbReference>
<dbReference type="GO" id="GO:0016973">
    <property type="term" value="P:poly(A)+ mRNA export from nucleus"/>
    <property type="evidence" value="ECO:0000318"/>
    <property type="project" value="GO_Central"/>
</dbReference>
<dbReference type="Gene3D" id="1.10.720.30">
    <property type="entry name" value="SAP domain"/>
    <property type="match status" value="1"/>
</dbReference>
<dbReference type="InterPro" id="IPR003034">
    <property type="entry name" value="SAP_dom"/>
</dbReference>
<dbReference type="InterPro" id="IPR036361">
    <property type="entry name" value="SAP_dom_sf"/>
</dbReference>
<dbReference type="InterPro" id="IPR052240">
    <property type="entry name" value="SAP_domain_ribonucleoprotein"/>
</dbReference>
<dbReference type="InterPro" id="IPR040746">
    <property type="entry name" value="THO1_MOS11_C"/>
</dbReference>
<dbReference type="PANTHER" id="PTHR46551">
    <property type="entry name" value="SAP DOMAIN-CONTAINING RIBONUCLEOPROTEIN"/>
    <property type="match status" value="1"/>
</dbReference>
<dbReference type="PANTHER" id="PTHR46551:SF1">
    <property type="entry name" value="SAP DOMAIN-CONTAINING RIBONUCLEOPROTEIN"/>
    <property type="match status" value="1"/>
</dbReference>
<dbReference type="Pfam" id="PF02037">
    <property type="entry name" value="SAP"/>
    <property type="match status" value="1"/>
</dbReference>
<dbReference type="Pfam" id="PF18592">
    <property type="entry name" value="Tho1_MOS11_C"/>
    <property type="match status" value="1"/>
</dbReference>
<dbReference type="SMART" id="SM00513">
    <property type="entry name" value="SAP"/>
    <property type="match status" value="1"/>
</dbReference>
<dbReference type="SUPFAM" id="SSF68906">
    <property type="entry name" value="SAP domain"/>
    <property type="match status" value="1"/>
</dbReference>
<dbReference type="PROSITE" id="PS50800">
    <property type="entry name" value="SAP"/>
    <property type="match status" value="1"/>
</dbReference>
<keyword id="KW-0597">Phosphoprotein</keyword>
<keyword id="KW-1185">Reference proteome</keyword>
<gene>
    <name type="primary">mlo1</name>
    <name type="ORF">SPCC31H12.03c</name>
</gene>